<evidence type="ECO:0000250" key="1">
    <source>
        <dbReference type="UniProtKB" id="P0ACI0"/>
    </source>
</evidence>
<evidence type="ECO:0000250" key="2">
    <source>
        <dbReference type="UniProtKB" id="Q8ZJU7"/>
    </source>
</evidence>
<evidence type="ECO:0000255" key="3">
    <source>
        <dbReference type="PROSITE-ProRule" id="PRU00593"/>
    </source>
</evidence>
<keyword id="KW-0238">DNA-binding</keyword>
<keyword id="KW-1185">Reference proteome</keyword>
<keyword id="KW-0804">Transcription</keyword>
<keyword id="KW-0805">Transcription regulation</keyword>
<gene>
    <name type="primary">rob</name>
    <name type="ordered locus">Z5999</name>
    <name type="ordered locus">ECs5354</name>
</gene>
<accession>P0ACI1</accession>
<accession>P27292</accession>
<comment type="function">
    <text evidence="1 2">Transcriptional regulator (By similarity). Binds to the right arm of the replication origin oriC of the chromosome. Rob binding may influence the formation of the nucleoprotein structure, required for oriC function in the initiation of replication (By similarity).</text>
</comment>
<dbReference type="EMBL" id="AE005174">
    <property type="protein sequence ID" value="AAG59576.1"/>
    <property type="molecule type" value="Genomic_DNA"/>
</dbReference>
<dbReference type="EMBL" id="BA000007">
    <property type="protein sequence ID" value="BAB38777.1"/>
    <property type="molecule type" value="Genomic_DNA"/>
</dbReference>
<dbReference type="PIR" id="B91298">
    <property type="entry name" value="B91298"/>
</dbReference>
<dbReference type="PIR" id="D86139">
    <property type="entry name" value="D86139"/>
</dbReference>
<dbReference type="RefSeq" id="NP_313381.1">
    <property type="nucleotide sequence ID" value="NC_002695.1"/>
</dbReference>
<dbReference type="SMR" id="P0ACI1"/>
<dbReference type="STRING" id="155864.Z5999"/>
<dbReference type="GeneID" id="913486"/>
<dbReference type="KEGG" id="ece:Z5999"/>
<dbReference type="KEGG" id="ecs:ECs_5354"/>
<dbReference type="PATRIC" id="fig|386585.9.peg.5602"/>
<dbReference type="eggNOG" id="COG2207">
    <property type="taxonomic scope" value="Bacteria"/>
</dbReference>
<dbReference type="eggNOG" id="COG3708">
    <property type="taxonomic scope" value="Bacteria"/>
</dbReference>
<dbReference type="HOGENOM" id="CLU_000445_81_1_6"/>
<dbReference type="OMA" id="WRQYLGE"/>
<dbReference type="Proteomes" id="UP000000558">
    <property type="component" value="Chromosome"/>
</dbReference>
<dbReference type="Proteomes" id="UP000002519">
    <property type="component" value="Chromosome"/>
</dbReference>
<dbReference type="GO" id="GO:0003700">
    <property type="term" value="F:DNA-binding transcription factor activity"/>
    <property type="evidence" value="ECO:0007669"/>
    <property type="project" value="InterPro"/>
</dbReference>
<dbReference type="GO" id="GO:0043565">
    <property type="term" value="F:sequence-specific DNA binding"/>
    <property type="evidence" value="ECO:0007669"/>
    <property type="project" value="InterPro"/>
</dbReference>
<dbReference type="FunFam" id="1.10.10.60:FF:000013">
    <property type="entry name" value="DNA-binding transcriptional activator MarA"/>
    <property type="match status" value="1"/>
</dbReference>
<dbReference type="FunFam" id="1.10.10.60:FF:000030">
    <property type="entry name" value="DNA-binding transcriptional regulator SoxS"/>
    <property type="match status" value="1"/>
</dbReference>
<dbReference type="Gene3D" id="1.10.10.60">
    <property type="entry name" value="Homeodomain-like"/>
    <property type="match status" value="2"/>
</dbReference>
<dbReference type="Gene3D" id="3.20.80.10">
    <property type="entry name" value="Regulatory factor, effector binding domain"/>
    <property type="match status" value="1"/>
</dbReference>
<dbReference type="InterPro" id="IPR010499">
    <property type="entry name" value="AraC_E-bd"/>
</dbReference>
<dbReference type="InterPro" id="IPR029442">
    <property type="entry name" value="GyrI-like"/>
</dbReference>
<dbReference type="InterPro" id="IPR009057">
    <property type="entry name" value="Homeodomain-like_sf"/>
</dbReference>
<dbReference type="InterPro" id="IPR018060">
    <property type="entry name" value="HTH_AraC"/>
</dbReference>
<dbReference type="InterPro" id="IPR018062">
    <property type="entry name" value="HTH_AraC-typ_CS"/>
</dbReference>
<dbReference type="InterPro" id="IPR050959">
    <property type="entry name" value="MarA-like"/>
</dbReference>
<dbReference type="InterPro" id="IPR011256">
    <property type="entry name" value="Reg_factor_effector_dom_sf"/>
</dbReference>
<dbReference type="InterPro" id="IPR020449">
    <property type="entry name" value="Tscrpt_reg_AraC-type_HTH"/>
</dbReference>
<dbReference type="NCBIfam" id="NF011701">
    <property type="entry name" value="PRK15121.1"/>
    <property type="match status" value="1"/>
</dbReference>
<dbReference type="NCBIfam" id="NF012228">
    <property type="entry name" value="RobA_TF"/>
    <property type="match status" value="1"/>
</dbReference>
<dbReference type="PANTHER" id="PTHR47504">
    <property type="entry name" value="RIGHT ORIGIN-BINDING PROTEIN"/>
    <property type="match status" value="1"/>
</dbReference>
<dbReference type="PANTHER" id="PTHR47504:SF5">
    <property type="entry name" value="RIGHT ORIGIN-BINDING PROTEIN"/>
    <property type="match status" value="1"/>
</dbReference>
<dbReference type="Pfam" id="PF06445">
    <property type="entry name" value="GyrI-like"/>
    <property type="match status" value="1"/>
</dbReference>
<dbReference type="Pfam" id="PF12833">
    <property type="entry name" value="HTH_18"/>
    <property type="match status" value="1"/>
</dbReference>
<dbReference type="PRINTS" id="PR00032">
    <property type="entry name" value="HTHARAC"/>
</dbReference>
<dbReference type="SMART" id="SM00871">
    <property type="entry name" value="AraC_E_bind"/>
    <property type="match status" value="1"/>
</dbReference>
<dbReference type="SMART" id="SM00342">
    <property type="entry name" value="HTH_ARAC"/>
    <property type="match status" value="1"/>
</dbReference>
<dbReference type="SUPFAM" id="SSF46689">
    <property type="entry name" value="Homeodomain-like"/>
    <property type="match status" value="2"/>
</dbReference>
<dbReference type="SUPFAM" id="SSF55136">
    <property type="entry name" value="Probable bacterial effector-binding domain"/>
    <property type="match status" value="1"/>
</dbReference>
<dbReference type="PROSITE" id="PS00041">
    <property type="entry name" value="HTH_ARAC_FAMILY_1"/>
    <property type="match status" value="1"/>
</dbReference>
<dbReference type="PROSITE" id="PS01124">
    <property type="entry name" value="HTH_ARAC_FAMILY_2"/>
    <property type="match status" value="1"/>
</dbReference>
<reference key="1">
    <citation type="journal article" date="2001" name="Nature">
        <title>Genome sequence of enterohaemorrhagic Escherichia coli O157:H7.</title>
        <authorList>
            <person name="Perna N.T."/>
            <person name="Plunkett G. III"/>
            <person name="Burland V."/>
            <person name="Mau B."/>
            <person name="Glasner J.D."/>
            <person name="Rose D.J."/>
            <person name="Mayhew G.F."/>
            <person name="Evans P.S."/>
            <person name="Gregor J."/>
            <person name="Kirkpatrick H.A."/>
            <person name="Posfai G."/>
            <person name="Hackett J."/>
            <person name="Klink S."/>
            <person name="Boutin A."/>
            <person name="Shao Y."/>
            <person name="Miller L."/>
            <person name="Grotbeck E.J."/>
            <person name="Davis N.W."/>
            <person name="Lim A."/>
            <person name="Dimalanta E.T."/>
            <person name="Potamousis K."/>
            <person name="Apodaca J."/>
            <person name="Anantharaman T.S."/>
            <person name="Lin J."/>
            <person name="Yen G."/>
            <person name="Schwartz D.C."/>
            <person name="Welch R.A."/>
            <person name="Blattner F.R."/>
        </authorList>
    </citation>
    <scope>NUCLEOTIDE SEQUENCE [LARGE SCALE GENOMIC DNA]</scope>
    <source>
        <strain>O157:H7 / EDL933 / ATCC 700927 / EHEC</strain>
    </source>
</reference>
<reference key="2">
    <citation type="journal article" date="2001" name="DNA Res.">
        <title>Complete genome sequence of enterohemorrhagic Escherichia coli O157:H7 and genomic comparison with a laboratory strain K-12.</title>
        <authorList>
            <person name="Hayashi T."/>
            <person name="Makino K."/>
            <person name="Ohnishi M."/>
            <person name="Kurokawa K."/>
            <person name="Ishii K."/>
            <person name="Yokoyama K."/>
            <person name="Han C.-G."/>
            <person name="Ohtsubo E."/>
            <person name="Nakayama K."/>
            <person name="Murata T."/>
            <person name="Tanaka M."/>
            <person name="Tobe T."/>
            <person name="Iida T."/>
            <person name="Takami H."/>
            <person name="Honda T."/>
            <person name="Sasakawa C."/>
            <person name="Ogasawara N."/>
            <person name="Yasunaga T."/>
            <person name="Kuhara S."/>
            <person name="Shiba T."/>
            <person name="Hattori M."/>
            <person name="Shinagawa H."/>
        </authorList>
    </citation>
    <scope>NUCLEOTIDE SEQUENCE [LARGE SCALE GENOMIC DNA]</scope>
    <source>
        <strain>O157:H7 / Sakai / RIMD 0509952 / EHEC</strain>
    </source>
</reference>
<organism>
    <name type="scientific">Escherichia coli O157:H7</name>
    <dbReference type="NCBI Taxonomy" id="83334"/>
    <lineage>
        <taxon>Bacteria</taxon>
        <taxon>Pseudomonadati</taxon>
        <taxon>Pseudomonadota</taxon>
        <taxon>Gammaproteobacteria</taxon>
        <taxon>Enterobacterales</taxon>
        <taxon>Enterobacteriaceae</taxon>
        <taxon>Escherichia</taxon>
    </lineage>
</organism>
<proteinExistence type="inferred from homology"/>
<feature type="chain" id="PRO_0000194579" description="Right origin-binding protein">
    <location>
        <begin position="1"/>
        <end position="289"/>
    </location>
</feature>
<feature type="domain" description="HTH araC/xylS-type" evidence="3">
    <location>
        <begin position="8"/>
        <end position="106"/>
    </location>
</feature>
<feature type="DNA-binding region" description="H-T-H motif" evidence="3">
    <location>
        <begin position="25"/>
        <end position="46"/>
    </location>
</feature>
<feature type="DNA-binding region" description="H-T-H motif" evidence="3">
    <location>
        <begin position="73"/>
        <end position="96"/>
    </location>
</feature>
<name>ROB_ECO57</name>
<protein>
    <recommendedName>
        <fullName>Right origin-binding protein</fullName>
    </recommendedName>
</protein>
<sequence>MDQAGIIRDLLIWLEGHLDQPLSLDNVAAKAGYSKWHLQRMFKDVTGHAIGAYIRARRLSKSAVALRLTARPILDIALQYRFDSQQTFTRAFKKQFAQTPALYRRSPEWSAFGIRPPLRLGEFTMPEHKFVTLEDTPLIGVTQSYSCSLEQISDFRHEMRYQFWHDFLGNAPTIPPVLYGLNETRPSQDKDDEQEVFYTTALAQDQADGYVLTGHPVMLQGGEYVMFTYEGLGTGVQEFILTVYGTCMPMLNLTRRKGQDIERYYPAEDAKAGDRPINLRCELLIPIRR</sequence>